<proteinExistence type="evidence at protein level"/>
<gene>
    <name evidence="5" type="primary">Adcyap1r1</name>
</gene>
<name>PACR_MOUSE</name>
<comment type="function">
    <text evidence="2">G protein-coupled receptor activated by the neuropeptide pituitary adenylate cyclase-activating polypeptide (ADCYAP1/PACAP). Binds both PACAP27 and PACAP38 bioactive peptides. Ligand binding causes a conformation change that triggers signaling via guanine nucleotide-binding proteins (G proteins) and modulates the activity of downstream effectors. Activates cAMP-dependent pathway. May regulate the release of adrenocorticotropin, luteinizing hormone, growth hormone, prolactin, epinephrine, and catecholamine. May play a role in spermatogenesis and sperm motility. Causes smooth muscle relaxation and secretion in the gastrointestinal tract.</text>
</comment>
<comment type="subunit">
    <text evidence="2">Interacts with maxadilan, a vasodilator peptide from Lutzomyia longipalpis saliva; the interaction results in ADCYAP1R1 activation.</text>
</comment>
<comment type="subcellular location">
    <subcellularLocation>
        <location>Cell membrane</location>
        <topology evidence="2">Multi-pass membrane protein</topology>
    </subcellularLocation>
</comment>
<comment type="similarity">
    <text evidence="4">Belongs to the G-protein coupled receptor 2 family.</text>
</comment>
<feature type="signal peptide" evidence="3">
    <location>
        <begin position="1"/>
        <end position="20"/>
    </location>
</feature>
<feature type="chain" id="PRO_0000012842" description="Pituitary adenylate cyclase-activating polypeptide type I receptor">
    <location>
        <begin position="21"/>
        <end position="496"/>
    </location>
</feature>
<feature type="topological domain" description="Extracellular" evidence="4">
    <location>
        <begin position="21"/>
        <end position="152"/>
    </location>
</feature>
<feature type="transmembrane region" description="Helical; Name=1" evidence="2">
    <location>
        <begin position="153"/>
        <end position="177"/>
    </location>
</feature>
<feature type="topological domain" description="Cytoplasmic" evidence="4">
    <location>
        <begin position="178"/>
        <end position="187"/>
    </location>
</feature>
<feature type="transmembrane region" description="Helical; Name=2" evidence="2">
    <location>
        <begin position="188"/>
        <end position="208"/>
    </location>
</feature>
<feature type="topological domain" description="Extracellular" evidence="4">
    <location>
        <begin position="209"/>
        <end position="223"/>
    </location>
</feature>
<feature type="transmembrane region" description="Helical; Name=3" evidence="2">
    <location>
        <begin position="224"/>
        <end position="249"/>
    </location>
</feature>
<feature type="topological domain" description="Cytoplasmic" evidence="4">
    <location>
        <begin position="250"/>
        <end position="267"/>
    </location>
</feature>
<feature type="transmembrane region" description="Helical; Name=4" evidence="2">
    <location>
        <begin position="268"/>
        <end position="290"/>
    </location>
</feature>
<feature type="topological domain" description="Extracellular" evidence="4">
    <location>
        <begin position="291"/>
        <end position="302"/>
    </location>
</feature>
<feature type="transmembrane region" description="Helical; Name=5" evidence="2">
    <location>
        <begin position="303"/>
        <end position="329"/>
    </location>
</feature>
<feature type="topological domain" description="Cytoplasmic" evidence="4">
    <location>
        <begin position="330"/>
        <end position="347"/>
    </location>
</feature>
<feature type="transmembrane region" description="Helical; Name=6" evidence="2">
    <location>
        <begin position="348"/>
        <end position="402"/>
    </location>
</feature>
<feature type="topological domain" description="Extracellular" evidence="4">
    <location>
        <begin position="403"/>
        <end position="407"/>
    </location>
</feature>
<feature type="transmembrane region" description="Helical; Name=7" evidence="2">
    <location>
        <begin position="408"/>
        <end position="431"/>
    </location>
</feature>
<feature type="topological domain" description="Cytoplasmic" evidence="4">
    <location>
        <begin position="432"/>
        <end position="496"/>
    </location>
</feature>
<feature type="region of interest" description="Important for ADCYAP1/PACAP ligand binding and specificity" evidence="2">
    <location>
        <begin position="125"/>
        <end position="139"/>
    </location>
</feature>
<feature type="region of interest" description="Important for ligand binding and specificity" evidence="1">
    <location>
        <begin position="125"/>
        <end position="139"/>
    </location>
</feature>
<feature type="modified residue" description="Phosphoserine" evidence="6">
    <location>
        <position position="462"/>
    </location>
</feature>
<feature type="modified residue" description="Phosphoserine" evidence="6">
    <location>
        <position position="475"/>
    </location>
</feature>
<feature type="glycosylation site" description="N-linked (GlcNAc...) asparagine" evidence="3">
    <location>
        <position position="48"/>
    </location>
</feature>
<feature type="glycosylation site" description="N-linked (GlcNAc...) asparagine" evidence="3">
    <location>
        <position position="60"/>
    </location>
</feature>
<feature type="glycosylation site" description="N-linked (GlcNAc...) asparagine" evidence="3">
    <location>
        <position position="117"/>
    </location>
</feature>
<feature type="disulfide bond" evidence="2">
    <location>
        <begin position="34"/>
        <end position="63"/>
    </location>
</feature>
<feature type="disulfide bond" evidence="2">
    <location>
        <begin position="54"/>
        <end position="118"/>
    </location>
</feature>
<feature type="disulfide bond" evidence="2">
    <location>
        <begin position="77"/>
        <end position="134"/>
    </location>
</feature>
<feature type="disulfide bond" evidence="2">
    <location>
        <begin position="226"/>
        <end position="296"/>
    </location>
</feature>
<organism>
    <name type="scientific">Mus musculus</name>
    <name type="common">Mouse</name>
    <dbReference type="NCBI Taxonomy" id="10090"/>
    <lineage>
        <taxon>Eukaryota</taxon>
        <taxon>Metazoa</taxon>
        <taxon>Chordata</taxon>
        <taxon>Craniata</taxon>
        <taxon>Vertebrata</taxon>
        <taxon>Euteleostomi</taxon>
        <taxon>Mammalia</taxon>
        <taxon>Eutheria</taxon>
        <taxon>Euarchontoglires</taxon>
        <taxon>Glires</taxon>
        <taxon>Rodentia</taxon>
        <taxon>Myomorpha</taxon>
        <taxon>Muroidea</taxon>
        <taxon>Muridae</taxon>
        <taxon>Murinae</taxon>
        <taxon>Mus</taxon>
        <taxon>Mus</taxon>
    </lineage>
</organism>
<dbReference type="EMBL" id="D82935">
    <property type="protein sequence ID" value="BAA11639.1"/>
    <property type="molecule type" value="mRNA"/>
</dbReference>
<dbReference type="CCDS" id="CCDS20167.1"/>
<dbReference type="RefSeq" id="NP_031433.3">
    <property type="nucleotide sequence ID" value="NM_007407.4"/>
</dbReference>
<dbReference type="RefSeq" id="XP_030110972.1">
    <property type="nucleotide sequence ID" value="XM_030255112.2"/>
</dbReference>
<dbReference type="SMR" id="P70205"/>
<dbReference type="BioGRID" id="197980">
    <property type="interactions" value="1"/>
</dbReference>
<dbReference type="FunCoup" id="P70205">
    <property type="interactions" value="656"/>
</dbReference>
<dbReference type="IntAct" id="P70205">
    <property type="interactions" value="1"/>
</dbReference>
<dbReference type="MINT" id="P70205"/>
<dbReference type="STRING" id="10090.ENSMUSP00000063784"/>
<dbReference type="GlyCosmos" id="P70205">
    <property type="glycosylation" value="3 sites, No reported glycans"/>
</dbReference>
<dbReference type="GlyGen" id="P70205">
    <property type="glycosylation" value="3 sites"/>
</dbReference>
<dbReference type="iPTMnet" id="P70205"/>
<dbReference type="PhosphoSitePlus" id="P70205"/>
<dbReference type="SwissPalm" id="P70205"/>
<dbReference type="PaxDb" id="10090-ENSMUSP00000063784"/>
<dbReference type="ProteomicsDB" id="294242"/>
<dbReference type="Antibodypedia" id="4280">
    <property type="antibodies" value="314 antibodies from 32 providers"/>
</dbReference>
<dbReference type="DNASU" id="11517"/>
<dbReference type="Ensembl" id="ENSMUST00000070736.12">
    <property type="protein sequence ID" value="ENSMUSP00000063784.6"/>
    <property type="gene ID" value="ENSMUSG00000029778.13"/>
</dbReference>
<dbReference type="GeneID" id="11517"/>
<dbReference type="KEGG" id="mmu:11517"/>
<dbReference type="UCSC" id="uc009cat.2">
    <property type="organism name" value="mouse"/>
</dbReference>
<dbReference type="AGR" id="MGI:108449"/>
<dbReference type="CTD" id="117"/>
<dbReference type="MGI" id="MGI:108449">
    <property type="gene designation" value="Adcyap1r1"/>
</dbReference>
<dbReference type="VEuPathDB" id="HostDB:ENSMUSG00000029778"/>
<dbReference type="eggNOG" id="KOG4564">
    <property type="taxonomic scope" value="Eukaryota"/>
</dbReference>
<dbReference type="GeneTree" id="ENSGT00940000157362"/>
<dbReference type="InParanoid" id="P70205"/>
<dbReference type="PhylomeDB" id="P70205"/>
<dbReference type="TreeFam" id="TF315710"/>
<dbReference type="Reactome" id="R-MMU-418555">
    <property type="pathway name" value="G alpha (s) signalling events"/>
</dbReference>
<dbReference type="Reactome" id="R-MMU-420092">
    <property type="pathway name" value="Glucagon-type ligand receptors"/>
</dbReference>
<dbReference type="BioGRID-ORCS" id="11517">
    <property type="hits" value="2 hits in 75 CRISPR screens"/>
</dbReference>
<dbReference type="ChiTaRS" id="Adcyap1r1">
    <property type="organism name" value="mouse"/>
</dbReference>
<dbReference type="PRO" id="PR:P70205"/>
<dbReference type="Proteomes" id="UP000000589">
    <property type="component" value="Chromosome 6"/>
</dbReference>
<dbReference type="RNAct" id="P70205">
    <property type="molecule type" value="protein"/>
</dbReference>
<dbReference type="Bgee" id="ENSMUSG00000029778">
    <property type="expression patterns" value="Expressed in paraventricular nucleus of hypothalamus and 180 other cell types or tissues"/>
</dbReference>
<dbReference type="ExpressionAtlas" id="P70205">
    <property type="expression patterns" value="baseline and differential"/>
</dbReference>
<dbReference type="GO" id="GO:0005886">
    <property type="term" value="C:plasma membrane"/>
    <property type="evidence" value="ECO:0007669"/>
    <property type="project" value="UniProtKB-SubCell"/>
</dbReference>
<dbReference type="GO" id="GO:0043235">
    <property type="term" value="C:receptor complex"/>
    <property type="evidence" value="ECO:0000266"/>
    <property type="project" value="MGI"/>
</dbReference>
<dbReference type="GO" id="GO:0004930">
    <property type="term" value="F:G protein-coupled receptor activity"/>
    <property type="evidence" value="ECO:0000304"/>
    <property type="project" value="MGI"/>
</dbReference>
<dbReference type="GO" id="GO:0001634">
    <property type="term" value="F:pituitary adenylate cyclase-activating polypeptide receptor activity"/>
    <property type="evidence" value="ECO:0000250"/>
    <property type="project" value="UniProtKB"/>
</dbReference>
<dbReference type="GO" id="GO:0004999">
    <property type="term" value="F:vasoactive intestinal polypeptide receptor activity"/>
    <property type="evidence" value="ECO:0000304"/>
    <property type="project" value="MGI"/>
</dbReference>
<dbReference type="GO" id="GO:0007189">
    <property type="term" value="P:adenylate cyclase-activating G protein-coupled receptor signaling pathway"/>
    <property type="evidence" value="ECO:0000250"/>
    <property type="project" value="UniProtKB"/>
</dbReference>
<dbReference type="GO" id="GO:0030154">
    <property type="term" value="P:cell differentiation"/>
    <property type="evidence" value="ECO:0007669"/>
    <property type="project" value="UniProtKB-KW"/>
</dbReference>
<dbReference type="GO" id="GO:0007166">
    <property type="term" value="P:cell surface receptor signaling pathway"/>
    <property type="evidence" value="ECO:0007669"/>
    <property type="project" value="InterPro"/>
</dbReference>
<dbReference type="GO" id="GO:0007186">
    <property type="term" value="P:G protein-coupled receptor signaling pathway"/>
    <property type="evidence" value="ECO:0000304"/>
    <property type="project" value="MGI"/>
</dbReference>
<dbReference type="GO" id="GO:0007283">
    <property type="term" value="P:spermatogenesis"/>
    <property type="evidence" value="ECO:0007669"/>
    <property type="project" value="UniProtKB-KW"/>
</dbReference>
<dbReference type="CDD" id="cd15987">
    <property type="entry name" value="7tmB1_PACAP-R1"/>
    <property type="match status" value="1"/>
</dbReference>
<dbReference type="FunFam" id="1.20.1070.10:FF:000022">
    <property type="entry name" value="Pituitary adenylate cyclase-activating polypeptide type I receptor"/>
    <property type="match status" value="1"/>
</dbReference>
<dbReference type="FunFam" id="4.10.1240.10:FF:000008">
    <property type="entry name" value="pituitary adenylate cyclase-activating polypeptide type I receptor"/>
    <property type="match status" value="1"/>
</dbReference>
<dbReference type="Gene3D" id="4.10.1240.10">
    <property type="entry name" value="GPCR, family 2, extracellular hormone receptor domain"/>
    <property type="match status" value="1"/>
</dbReference>
<dbReference type="Gene3D" id="1.20.1070.10">
    <property type="entry name" value="Rhodopsin 7-helix transmembrane proteins"/>
    <property type="match status" value="1"/>
</dbReference>
<dbReference type="InterPro" id="IPR050332">
    <property type="entry name" value="GPCR_2"/>
</dbReference>
<dbReference type="InterPro" id="IPR017981">
    <property type="entry name" value="GPCR_2-like_7TM"/>
</dbReference>
<dbReference type="InterPro" id="IPR036445">
    <property type="entry name" value="GPCR_2_extracell_dom_sf"/>
</dbReference>
<dbReference type="InterPro" id="IPR001879">
    <property type="entry name" value="GPCR_2_extracellular_dom"/>
</dbReference>
<dbReference type="InterPro" id="IPR002285">
    <property type="entry name" value="GPCR_2_PACAP_1_rcpt"/>
</dbReference>
<dbReference type="InterPro" id="IPR000832">
    <property type="entry name" value="GPCR_2_secretin-like"/>
</dbReference>
<dbReference type="InterPro" id="IPR017983">
    <property type="entry name" value="GPCR_2_secretin-like_CS"/>
</dbReference>
<dbReference type="PANTHER" id="PTHR45620">
    <property type="entry name" value="PDF RECEPTOR-LIKE PROTEIN-RELATED"/>
    <property type="match status" value="1"/>
</dbReference>
<dbReference type="PANTHER" id="PTHR45620:SF12">
    <property type="entry name" value="PITUITARY ADENYLATE CYCLASE-ACTIVATING POLYPEPTIDE TYPE I RECEPTOR"/>
    <property type="match status" value="1"/>
</dbReference>
<dbReference type="Pfam" id="PF00002">
    <property type="entry name" value="7tm_2"/>
    <property type="match status" value="1"/>
</dbReference>
<dbReference type="Pfam" id="PF02793">
    <property type="entry name" value="HRM"/>
    <property type="match status" value="1"/>
</dbReference>
<dbReference type="PRINTS" id="PR00249">
    <property type="entry name" value="GPCRSECRETIN"/>
</dbReference>
<dbReference type="PRINTS" id="PR01156">
    <property type="entry name" value="PACAPRECEPTR"/>
</dbReference>
<dbReference type="SMART" id="SM00008">
    <property type="entry name" value="HormR"/>
    <property type="match status" value="1"/>
</dbReference>
<dbReference type="SUPFAM" id="SSF81321">
    <property type="entry name" value="Family A G protein-coupled receptor-like"/>
    <property type="match status" value="1"/>
</dbReference>
<dbReference type="SUPFAM" id="SSF111418">
    <property type="entry name" value="Hormone receptor domain"/>
    <property type="match status" value="1"/>
</dbReference>
<dbReference type="PROSITE" id="PS00649">
    <property type="entry name" value="G_PROTEIN_RECEP_F2_1"/>
    <property type="match status" value="1"/>
</dbReference>
<dbReference type="PROSITE" id="PS00650">
    <property type="entry name" value="G_PROTEIN_RECEP_F2_2"/>
    <property type="match status" value="1"/>
</dbReference>
<dbReference type="PROSITE" id="PS50227">
    <property type="entry name" value="G_PROTEIN_RECEP_F2_3"/>
    <property type="match status" value="1"/>
</dbReference>
<dbReference type="PROSITE" id="PS50261">
    <property type="entry name" value="G_PROTEIN_RECEP_F2_4"/>
    <property type="match status" value="1"/>
</dbReference>
<accession>P70205</accession>
<reference key="1">
    <citation type="journal article" date="1996" name="Biochim. Biophys. Acta">
        <title>cDNA cloning of a mouse pituitary adenylate cyclase-activating polypeptide receptor.</title>
        <authorList>
            <person name="Hashimoto H."/>
            <person name="Yamamoto K."/>
            <person name="Hagigara N."/>
            <person name="Ogawa N."/>
            <person name="Nishino A."/>
            <person name="Aino H."/>
            <person name="Nogi H."/>
            <person name="Imanishi K."/>
            <person name="Matsuda T."/>
            <person name="Baba A."/>
        </authorList>
    </citation>
    <scope>NUCLEOTIDE SEQUENCE [MRNA]</scope>
</reference>
<reference key="2">
    <citation type="journal article" date="2010" name="Cell">
        <title>A tissue-specific atlas of mouse protein phosphorylation and expression.</title>
        <authorList>
            <person name="Huttlin E.L."/>
            <person name="Jedrychowski M.P."/>
            <person name="Elias J.E."/>
            <person name="Goswami T."/>
            <person name="Rad R."/>
            <person name="Beausoleil S.A."/>
            <person name="Villen J."/>
            <person name="Haas W."/>
            <person name="Sowa M.E."/>
            <person name="Gygi S.P."/>
        </authorList>
    </citation>
    <scope>PHOSPHORYLATION [LARGE SCALE ANALYSIS] AT SER-462 AND SER-475</scope>
    <scope>IDENTIFICATION BY MASS SPECTROMETRY [LARGE SCALE ANALYSIS]</scope>
    <source>
        <tissue>Brain</tissue>
        <tissue>Brown adipose tissue</tissue>
        <tissue>Heart</tissue>
    </source>
</reference>
<protein>
    <recommendedName>
        <fullName>Pituitary adenylate cyclase-activating polypeptide type I receptor</fullName>
        <shortName>PACAP type I receptor</shortName>
        <shortName>PACAP-R-1</shortName>
        <shortName>PACAP-R1</shortName>
    </recommendedName>
</protein>
<sequence length="496" mass="56640">MARTLQLSLTALLLLPMAIAMHSDCIFKKEQAMCLERIQRANDLMGLNESSPGCPGMWDNITCWKPAQIGEMVLVSCPEVFRIFNPDQVWMTETIGDSGFADSNSLEITDMGVVGRNCTEDGWSEPFPHYFDACGFDDYEPESGDQDYYYLSVKALYTVGYSTSLVTLTTAMVILCRFRKLHCTRNFIHMNLFVSFMLRAISVFIKDWILYAEQDSSHCFVSTVECKAVMVFFHYCVVSNYFWLFIEGLYLFTLLVETFFPERRYFYWYTIIGWGTPTVCVTVWAVLRLYFDDAGCWDMNDSTALWWVIKGPVVGSIMVNFVLFIGIIIILVQKLQSPDMGGNESSIYFSCVQKCYCKPQRAQQHSCKMSELSTITLRLARSTLLLIPLFGIHYTVFAFSPENVSKRERLVFELGLGSFQGFVVAVLYCFLNGEVQAEIKRKWRSWKVNRYFTMDFKHRHPSLASSGVNGGTQLSILSKSSSQLRMSSLPADNLAT</sequence>
<evidence type="ECO:0000250" key="1"/>
<evidence type="ECO:0000250" key="2">
    <source>
        <dbReference type="UniProtKB" id="P41586"/>
    </source>
</evidence>
<evidence type="ECO:0000255" key="3"/>
<evidence type="ECO:0000305" key="4"/>
<evidence type="ECO:0000312" key="5">
    <source>
        <dbReference type="MGI" id="MGI:108449"/>
    </source>
</evidence>
<evidence type="ECO:0007744" key="6">
    <source>
    </source>
</evidence>
<keyword id="KW-1003">Cell membrane</keyword>
<keyword id="KW-0217">Developmental protein</keyword>
<keyword id="KW-0221">Differentiation</keyword>
<keyword id="KW-1015">Disulfide bond</keyword>
<keyword id="KW-0297">G-protein coupled receptor</keyword>
<keyword id="KW-0325">Glycoprotein</keyword>
<keyword id="KW-0472">Membrane</keyword>
<keyword id="KW-0597">Phosphoprotein</keyword>
<keyword id="KW-0675">Receptor</keyword>
<keyword id="KW-1185">Reference proteome</keyword>
<keyword id="KW-0732">Signal</keyword>
<keyword id="KW-0744">Spermatogenesis</keyword>
<keyword id="KW-0807">Transducer</keyword>
<keyword id="KW-0812">Transmembrane</keyword>
<keyword id="KW-1133">Transmembrane helix</keyword>